<gene>
    <name evidence="1" type="primary">trpF</name>
    <name type="ordered locus">Pisl_1918</name>
</gene>
<name>TRPF_PYRIL</name>
<evidence type="ECO:0000255" key="1">
    <source>
        <dbReference type="HAMAP-Rule" id="MF_00135"/>
    </source>
</evidence>
<feature type="chain" id="PRO_1000197137" description="N-(5'-phosphoribosyl)anthranilate isomerase">
    <location>
        <begin position="1"/>
        <end position="209"/>
    </location>
</feature>
<proteinExistence type="inferred from homology"/>
<keyword id="KW-0028">Amino-acid biosynthesis</keyword>
<keyword id="KW-0057">Aromatic amino acid biosynthesis</keyword>
<keyword id="KW-0413">Isomerase</keyword>
<keyword id="KW-0822">Tryptophan biosynthesis</keyword>
<accession>A1RVT3</accession>
<comment type="catalytic activity">
    <reaction evidence="1">
        <text>N-(5-phospho-beta-D-ribosyl)anthranilate = 1-(2-carboxyphenylamino)-1-deoxy-D-ribulose 5-phosphate</text>
        <dbReference type="Rhea" id="RHEA:21540"/>
        <dbReference type="ChEBI" id="CHEBI:18277"/>
        <dbReference type="ChEBI" id="CHEBI:58613"/>
        <dbReference type="EC" id="5.3.1.24"/>
    </reaction>
</comment>
<comment type="pathway">
    <text evidence="1">Amino-acid biosynthesis; L-tryptophan biosynthesis; L-tryptophan from chorismate: step 3/5.</text>
</comment>
<comment type="similarity">
    <text evidence="1">Belongs to the TrpF family.</text>
</comment>
<reference key="1">
    <citation type="submission" date="2006-12" db="EMBL/GenBank/DDBJ databases">
        <title>Complete sequence of Pyrobaculum islandicum DSM 4184.</title>
        <authorList>
            <person name="Copeland A."/>
            <person name="Lucas S."/>
            <person name="Lapidus A."/>
            <person name="Barry K."/>
            <person name="Detter J.C."/>
            <person name="Glavina del Rio T."/>
            <person name="Dalin E."/>
            <person name="Tice H."/>
            <person name="Pitluck S."/>
            <person name="Meincke L."/>
            <person name="Brettin T."/>
            <person name="Bruce D."/>
            <person name="Han C."/>
            <person name="Tapia R."/>
            <person name="Gilna P."/>
            <person name="Schmutz J."/>
            <person name="Larimer F."/>
            <person name="Land M."/>
            <person name="Hauser L."/>
            <person name="Kyrpides N."/>
            <person name="Mikhailova N."/>
            <person name="Cozen A.E."/>
            <person name="Fitz-Gibbon S.T."/>
            <person name="House C.H."/>
            <person name="Saltikov C."/>
            <person name="Lowe T."/>
            <person name="Richardson P."/>
        </authorList>
    </citation>
    <scope>NUCLEOTIDE SEQUENCE [LARGE SCALE GENOMIC DNA]</scope>
    <source>
        <strain>DSM 4184 / JCM 9189 / GEO3</strain>
    </source>
</reference>
<protein>
    <recommendedName>
        <fullName evidence="1">N-(5'-phosphoribosyl)anthranilate isomerase</fullName>
        <shortName evidence="1">PRAI</shortName>
        <ecNumber evidence="1">5.3.1.24</ecNumber>
    </recommendedName>
</protein>
<dbReference type="EC" id="5.3.1.24" evidence="1"/>
<dbReference type="EMBL" id="CP000504">
    <property type="protein sequence ID" value="ABL89065.1"/>
    <property type="molecule type" value="Genomic_DNA"/>
</dbReference>
<dbReference type="RefSeq" id="WP_011763640.1">
    <property type="nucleotide sequence ID" value="NC_008701.1"/>
</dbReference>
<dbReference type="SMR" id="A1RVT3"/>
<dbReference type="STRING" id="384616.Pisl_1918"/>
<dbReference type="GeneID" id="4617628"/>
<dbReference type="KEGG" id="pis:Pisl_1918"/>
<dbReference type="eggNOG" id="arCOG01983">
    <property type="taxonomic scope" value="Archaea"/>
</dbReference>
<dbReference type="HOGENOM" id="CLU_076364_3_0_2"/>
<dbReference type="OrthoDB" id="27513at2157"/>
<dbReference type="UniPathway" id="UPA00035">
    <property type="reaction ID" value="UER00042"/>
</dbReference>
<dbReference type="Proteomes" id="UP000002595">
    <property type="component" value="Chromosome"/>
</dbReference>
<dbReference type="GO" id="GO:0004640">
    <property type="term" value="F:phosphoribosylanthranilate isomerase activity"/>
    <property type="evidence" value="ECO:0007669"/>
    <property type="project" value="UniProtKB-UniRule"/>
</dbReference>
<dbReference type="GO" id="GO:0000162">
    <property type="term" value="P:L-tryptophan biosynthetic process"/>
    <property type="evidence" value="ECO:0007669"/>
    <property type="project" value="UniProtKB-UniRule"/>
</dbReference>
<dbReference type="CDD" id="cd00405">
    <property type="entry name" value="PRAI"/>
    <property type="match status" value="1"/>
</dbReference>
<dbReference type="Gene3D" id="3.20.20.70">
    <property type="entry name" value="Aldolase class I"/>
    <property type="match status" value="1"/>
</dbReference>
<dbReference type="HAMAP" id="MF_00135">
    <property type="entry name" value="PRAI"/>
    <property type="match status" value="1"/>
</dbReference>
<dbReference type="InterPro" id="IPR013785">
    <property type="entry name" value="Aldolase_TIM"/>
</dbReference>
<dbReference type="InterPro" id="IPR001240">
    <property type="entry name" value="PRAI_dom"/>
</dbReference>
<dbReference type="InterPro" id="IPR011060">
    <property type="entry name" value="RibuloseP-bd_barrel"/>
</dbReference>
<dbReference type="InterPro" id="IPR044643">
    <property type="entry name" value="TrpF_fam"/>
</dbReference>
<dbReference type="PANTHER" id="PTHR42894">
    <property type="entry name" value="N-(5'-PHOSPHORIBOSYL)ANTHRANILATE ISOMERASE"/>
    <property type="match status" value="1"/>
</dbReference>
<dbReference type="PANTHER" id="PTHR42894:SF1">
    <property type="entry name" value="N-(5'-PHOSPHORIBOSYL)ANTHRANILATE ISOMERASE"/>
    <property type="match status" value="1"/>
</dbReference>
<dbReference type="Pfam" id="PF00697">
    <property type="entry name" value="PRAI"/>
    <property type="match status" value="1"/>
</dbReference>
<dbReference type="SUPFAM" id="SSF51366">
    <property type="entry name" value="Ribulose-phoshate binding barrel"/>
    <property type="match status" value="1"/>
</dbReference>
<sequence>MLVKICGVARPEDVALLDGLVDYIGFIVEPSSPRSVEPRRLGELVRLVRESRPVLVTASLPPAEAVDLAASLGIPVVQHHGSLGDGHFSYAEERGVALAPVAVYRRGADLRAAVSQLLSKPHEYVLVDAEKGSRERYEGGLKIPLQALAEVAHMGKVALAGGITPENAHLVAALRPYMVDVASGVESSPGVKDPGKVKALLRALGRLSG</sequence>
<organism>
    <name type="scientific">Pyrobaculum islandicum (strain DSM 4184 / JCM 9189 / GEO3)</name>
    <dbReference type="NCBI Taxonomy" id="384616"/>
    <lineage>
        <taxon>Archaea</taxon>
        <taxon>Thermoproteota</taxon>
        <taxon>Thermoprotei</taxon>
        <taxon>Thermoproteales</taxon>
        <taxon>Thermoproteaceae</taxon>
        <taxon>Pyrobaculum</taxon>
    </lineage>
</organism>